<protein>
    <recommendedName>
        <fullName evidence="1">NADH-quinone oxidoreductase subunit B</fullName>
        <ecNumber evidence="1">7.1.1.-</ecNumber>
    </recommendedName>
    <alternativeName>
        <fullName evidence="1">NADH dehydrogenase I subunit B</fullName>
    </alternativeName>
    <alternativeName>
        <fullName evidence="1">NDH-1 subunit B</fullName>
    </alternativeName>
</protein>
<organism>
    <name type="scientific">Escherichia coli O157:H7 (strain EC4115 / EHEC)</name>
    <dbReference type="NCBI Taxonomy" id="444450"/>
    <lineage>
        <taxon>Bacteria</taxon>
        <taxon>Pseudomonadati</taxon>
        <taxon>Pseudomonadota</taxon>
        <taxon>Gammaproteobacteria</taxon>
        <taxon>Enterobacterales</taxon>
        <taxon>Enterobacteriaceae</taxon>
        <taxon>Escherichia</taxon>
    </lineage>
</organism>
<name>NUOB_ECO5E</name>
<comment type="function">
    <text evidence="1">NDH-1 shuttles electrons from NADH, via FMN and iron-sulfur (Fe-S) centers, to quinones in the respiratory chain. The immediate electron acceptor for the enzyme in this species is believed to be ubiquinone. Couples the redox reaction to proton translocation (for every two electrons transferred, four hydrogen ions are translocated across the cytoplasmic membrane), and thus conserves the redox energy in a proton gradient.</text>
</comment>
<comment type="catalytic activity">
    <reaction evidence="1">
        <text>a quinone + NADH + 5 H(+)(in) = a quinol + NAD(+) + 4 H(+)(out)</text>
        <dbReference type="Rhea" id="RHEA:57888"/>
        <dbReference type="ChEBI" id="CHEBI:15378"/>
        <dbReference type="ChEBI" id="CHEBI:24646"/>
        <dbReference type="ChEBI" id="CHEBI:57540"/>
        <dbReference type="ChEBI" id="CHEBI:57945"/>
        <dbReference type="ChEBI" id="CHEBI:132124"/>
    </reaction>
</comment>
<comment type="cofactor">
    <cofactor evidence="1">
        <name>[4Fe-4S] cluster</name>
        <dbReference type="ChEBI" id="CHEBI:49883"/>
    </cofactor>
    <text evidence="1">Binds 1 [4Fe-4S] cluster.</text>
</comment>
<comment type="subunit">
    <text evidence="1">NDH-1 is composed of 13 different subunits. Subunits NuoB, CD, E, F, and G constitute the peripheral sector of the complex.</text>
</comment>
<comment type="subcellular location">
    <subcellularLocation>
        <location evidence="1">Cell inner membrane</location>
        <topology evidence="1">Peripheral membrane protein</topology>
        <orientation evidence="1">Cytoplasmic side</orientation>
    </subcellularLocation>
</comment>
<comment type="similarity">
    <text evidence="1">Belongs to the complex I 20 kDa subunit family.</text>
</comment>
<dbReference type="EC" id="7.1.1.-" evidence="1"/>
<dbReference type="EMBL" id="CP001164">
    <property type="protein sequence ID" value="ACI39705.1"/>
    <property type="molecule type" value="Genomic_DNA"/>
</dbReference>
<dbReference type="RefSeq" id="WP_000386733.1">
    <property type="nucleotide sequence ID" value="NC_011353.1"/>
</dbReference>
<dbReference type="SMR" id="B5YXS7"/>
<dbReference type="GeneID" id="93774887"/>
<dbReference type="KEGG" id="ecf:ECH74115_3426"/>
<dbReference type="HOGENOM" id="CLU_055737_7_3_6"/>
<dbReference type="GO" id="GO:0005886">
    <property type="term" value="C:plasma membrane"/>
    <property type="evidence" value="ECO:0007669"/>
    <property type="project" value="UniProtKB-SubCell"/>
</dbReference>
<dbReference type="GO" id="GO:0045271">
    <property type="term" value="C:respiratory chain complex I"/>
    <property type="evidence" value="ECO:0007669"/>
    <property type="project" value="TreeGrafter"/>
</dbReference>
<dbReference type="GO" id="GO:0051539">
    <property type="term" value="F:4 iron, 4 sulfur cluster binding"/>
    <property type="evidence" value="ECO:0007669"/>
    <property type="project" value="UniProtKB-KW"/>
</dbReference>
<dbReference type="GO" id="GO:0005506">
    <property type="term" value="F:iron ion binding"/>
    <property type="evidence" value="ECO:0007669"/>
    <property type="project" value="UniProtKB-UniRule"/>
</dbReference>
<dbReference type="GO" id="GO:0008137">
    <property type="term" value="F:NADH dehydrogenase (ubiquinone) activity"/>
    <property type="evidence" value="ECO:0007669"/>
    <property type="project" value="InterPro"/>
</dbReference>
<dbReference type="GO" id="GO:0050136">
    <property type="term" value="F:NADH:ubiquinone reductase (non-electrogenic) activity"/>
    <property type="evidence" value="ECO:0007669"/>
    <property type="project" value="UniProtKB-UniRule"/>
</dbReference>
<dbReference type="GO" id="GO:0048038">
    <property type="term" value="F:quinone binding"/>
    <property type="evidence" value="ECO:0007669"/>
    <property type="project" value="UniProtKB-KW"/>
</dbReference>
<dbReference type="GO" id="GO:0009060">
    <property type="term" value="P:aerobic respiration"/>
    <property type="evidence" value="ECO:0007669"/>
    <property type="project" value="TreeGrafter"/>
</dbReference>
<dbReference type="GO" id="GO:0015990">
    <property type="term" value="P:electron transport coupled proton transport"/>
    <property type="evidence" value="ECO:0007669"/>
    <property type="project" value="TreeGrafter"/>
</dbReference>
<dbReference type="FunFam" id="3.40.50.12280:FF:000002">
    <property type="entry name" value="NADH-quinone oxidoreductase subunit B"/>
    <property type="match status" value="1"/>
</dbReference>
<dbReference type="Gene3D" id="3.40.50.12280">
    <property type="match status" value="1"/>
</dbReference>
<dbReference type="HAMAP" id="MF_01356">
    <property type="entry name" value="NDH1_NuoB"/>
    <property type="match status" value="1"/>
</dbReference>
<dbReference type="InterPro" id="IPR006137">
    <property type="entry name" value="NADH_UbQ_OxRdtase-like_20kDa"/>
</dbReference>
<dbReference type="InterPro" id="IPR006138">
    <property type="entry name" value="NADH_UQ_OxRdtase_20Kd_su"/>
</dbReference>
<dbReference type="NCBIfam" id="TIGR01957">
    <property type="entry name" value="nuoB_fam"/>
    <property type="match status" value="1"/>
</dbReference>
<dbReference type="NCBIfam" id="NF005012">
    <property type="entry name" value="PRK06411.1"/>
    <property type="match status" value="1"/>
</dbReference>
<dbReference type="PANTHER" id="PTHR11995">
    <property type="entry name" value="NADH DEHYDROGENASE"/>
    <property type="match status" value="1"/>
</dbReference>
<dbReference type="PANTHER" id="PTHR11995:SF14">
    <property type="entry name" value="NADH DEHYDROGENASE [UBIQUINONE] IRON-SULFUR PROTEIN 7, MITOCHONDRIAL"/>
    <property type="match status" value="1"/>
</dbReference>
<dbReference type="Pfam" id="PF01058">
    <property type="entry name" value="Oxidored_q6"/>
    <property type="match status" value="1"/>
</dbReference>
<dbReference type="SUPFAM" id="SSF56770">
    <property type="entry name" value="HydA/Nqo6-like"/>
    <property type="match status" value="1"/>
</dbReference>
<dbReference type="PROSITE" id="PS01150">
    <property type="entry name" value="COMPLEX1_20K"/>
    <property type="match status" value="1"/>
</dbReference>
<accession>B5YXS7</accession>
<gene>
    <name evidence="1" type="primary">nuoB</name>
    <name type="ordered locus">ECH74115_3426</name>
</gene>
<proteinExistence type="inferred from homology"/>
<sequence length="220" mass="25056">MDYTLTRIDPNGENDRYPLQKQEIVTDPLEQEVNKNVFMGKLNDMVNWGRKNSIWPYNFGLSCCYVEMVTSFTAVHDVARFGAEVLRASPRQADLMVVAGTCFTKMAPVIQRLYDQMLEPKWVISMGACANSGGMYDIYSVVQGVDKFIPVDVYIPGCPPRPEAYMQALMLLQESIGKERRPLSWVVGDQGVYRANMQSERERKRGERIAVTNLRTPDEI</sequence>
<feature type="chain" id="PRO_0000376214" description="NADH-quinone oxidoreductase subunit B">
    <location>
        <begin position="1"/>
        <end position="220"/>
    </location>
</feature>
<feature type="binding site" evidence="1">
    <location>
        <position position="63"/>
    </location>
    <ligand>
        <name>[4Fe-4S] cluster</name>
        <dbReference type="ChEBI" id="CHEBI:49883"/>
    </ligand>
</feature>
<feature type="binding site" evidence="1">
    <location>
        <position position="64"/>
    </location>
    <ligand>
        <name>[4Fe-4S] cluster</name>
        <dbReference type="ChEBI" id="CHEBI:49883"/>
    </ligand>
</feature>
<feature type="binding site" evidence="1">
    <location>
        <position position="129"/>
    </location>
    <ligand>
        <name>[4Fe-4S] cluster</name>
        <dbReference type="ChEBI" id="CHEBI:49883"/>
    </ligand>
</feature>
<feature type="binding site" evidence="1">
    <location>
        <position position="158"/>
    </location>
    <ligand>
        <name>[4Fe-4S] cluster</name>
        <dbReference type="ChEBI" id="CHEBI:49883"/>
    </ligand>
</feature>
<evidence type="ECO:0000255" key="1">
    <source>
        <dbReference type="HAMAP-Rule" id="MF_01356"/>
    </source>
</evidence>
<reference key="1">
    <citation type="journal article" date="2011" name="Proc. Natl. Acad. Sci. U.S.A.">
        <title>Genomic anatomy of Escherichia coli O157:H7 outbreaks.</title>
        <authorList>
            <person name="Eppinger M."/>
            <person name="Mammel M.K."/>
            <person name="Leclerc J.E."/>
            <person name="Ravel J."/>
            <person name="Cebula T.A."/>
        </authorList>
    </citation>
    <scope>NUCLEOTIDE SEQUENCE [LARGE SCALE GENOMIC DNA]</scope>
    <source>
        <strain>EC4115 / EHEC</strain>
    </source>
</reference>
<keyword id="KW-0004">4Fe-4S</keyword>
<keyword id="KW-0997">Cell inner membrane</keyword>
<keyword id="KW-1003">Cell membrane</keyword>
<keyword id="KW-0408">Iron</keyword>
<keyword id="KW-0411">Iron-sulfur</keyword>
<keyword id="KW-0472">Membrane</keyword>
<keyword id="KW-0479">Metal-binding</keyword>
<keyword id="KW-0520">NAD</keyword>
<keyword id="KW-0874">Quinone</keyword>
<keyword id="KW-1278">Translocase</keyword>
<keyword id="KW-0813">Transport</keyword>
<keyword id="KW-0830">Ubiquinone</keyword>